<sequence>MADTSVQKLAAEVGKSVERLIEQFSEAGLKKGQADTVSETEKQQLLDYLKKQHGADKAPTKMTLQRKTVSTLSVPAGGGQSKDVKVEVRKKRTFVKRDDSELVDQAELEAKAKAEADAKAAAEAKQKADAEAQAKAAAEAKAKAEANKAKEKAPQAPAPKPKAELKAETPEAAAARAEAERIKATQEAVLTKKQKEEAAQAAEEAKKLAEVNSKRWAEEERLRLEAEKNGDHHVTTSKVARAAEDSSDMDDEKRGRRARNKPTNKKRGGKDARDGREKHMRNRSTAPQSMAHGFNKPVAAVSRDVRIGETVSVAELAHLMAVKATEIIKQMMKMGSMVTINQILDQETAQMVAEEMGHKVVLLRENELEEQVLGDRDDNVKLETRAPVVTIMGHVDHGKTSLLDYIRRAKVAAGEAGGITQHIGAYHVETDNGMITFLDTPGHAAFTSMRARGAKATDIVILVVAADDGVMPQTIEAIQHAKAGNVPLIVAVNKMDKPDADPERVKSELSQHGVMSDDWGGDNMFVHLSAKTGEGVDELLEGILLQSEVLELKAVREGMAAGVVIESQLDKGRGPVATVLVQSGTLRQGDIVLCGLMYGKIRAMKDENGNAITEAGPSIPVEILGLSGVPSAGDEATVVRDERKAREVALYRQGKFRDVKLARQQKSKLENMFANMEEGEVQELNIVLKADVQGSLEAICDSLTGLSTAEVKVNIIARGVGALTETDATLAAASNAIMVGFNVRADAQARKTIEAESVDLRYYSIIYNLIDEVRAAMTGMLAPEFKQQIIGLAEVRDVFKSPKIGAIAGCMVTEGIVKRSAPIRVLRDNVVIYEGELESLRRFKDDATEVRNGMECGIGVKNYNDVRVGDQIEVFETIEVARTL</sequence>
<feature type="chain" id="PRO_1000008330" description="Translation initiation factor IF-2">
    <location>
        <begin position="1"/>
        <end position="884"/>
    </location>
</feature>
<feature type="domain" description="tr-type G">
    <location>
        <begin position="384"/>
        <end position="553"/>
    </location>
</feature>
<feature type="region of interest" description="Disordered" evidence="3">
    <location>
        <begin position="110"/>
        <end position="291"/>
    </location>
</feature>
<feature type="region of interest" description="G1" evidence="1">
    <location>
        <begin position="393"/>
        <end position="400"/>
    </location>
</feature>
<feature type="region of interest" description="G2" evidence="1">
    <location>
        <begin position="418"/>
        <end position="422"/>
    </location>
</feature>
<feature type="region of interest" description="G3" evidence="1">
    <location>
        <begin position="439"/>
        <end position="442"/>
    </location>
</feature>
<feature type="region of interest" description="G4" evidence="1">
    <location>
        <begin position="493"/>
        <end position="496"/>
    </location>
</feature>
<feature type="region of interest" description="G5" evidence="1">
    <location>
        <begin position="529"/>
        <end position="531"/>
    </location>
</feature>
<feature type="compositionally biased region" description="Basic and acidic residues" evidence="3">
    <location>
        <begin position="110"/>
        <end position="153"/>
    </location>
</feature>
<feature type="compositionally biased region" description="Basic and acidic residues" evidence="3">
    <location>
        <begin position="193"/>
        <end position="234"/>
    </location>
</feature>
<feature type="compositionally biased region" description="Basic residues" evidence="3">
    <location>
        <begin position="255"/>
        <end position="268"/>
    </location>
</feature>
<feature type="binding site" evidence="2">
    <location>
        <begin position="393"/>
        <end position="400"/>
    </location>
    <ligand>
        <name>GTP</name>
        <dbReference type="ChEBI" id="CHEBI:37565"/>
    </ligand>
</feature>
<feature type="binding site" evidence="2">
    <location>
        <begin position="439"/>
        <end position="443"/>
    </location>
    <ligand>
        <name>GTP</name>
        <dbReference type="ChEBI" id="CHEBI:37565"/>
    </ligand>
</feature>
<feature type="binding site" evidence="2">
    <location>
        <begin position="493"/>
        <end position="496"/>
    </location>
    <ligand>
        <name>GTP</name>
        <dbReference type="ChEBI" id="CHEBI:37565"/>
    </ligand>
</feature>
<gene>
    <name evidence="2" type="primary">infB</name>
    <name type="ordered locus">Sden_1007</name>
</gene>
<proteinExistence type="inferred from homology"/>
<organism>
    <name type="scientific">Shewanella denitrificans (strain OS217 / ATCC BAA-1090 / DSM 15013)</name>
    <dbReference type="NCBI Taxonomy" id="318161"/>
    <lineage>
        <taxon>Bacteria</taxon>
        <taxon>Pseudomonadati</taxon>
        <taxon>Pseudomonadota</taxon>
        <taxon>Gammaproteobacteria</taxon>
        <taxon>Alteromonadales</taxon>
        <taxon>Shewanellaceae</taxon>
        <taxon>Shewanella</taxon>
    </lineage>
</organism>
<comment type="function">
    <text evidence="2">One of the essential components for the initiation of protein synthesis. Protects formylmethionyl-tRNA from spontaneous hydrolysis and promotes its binding to the 30S ribosomal subunits. Also involved in the hydrolysis of GTP during the formation of the 70S ribosomal complex.</text>
</comment>
<comment type="subcellular location">
    <subcellularLocation>
        <location evidence="2">Cytoplasm</location>
    </subcellularLocation>
</comment>
<comment type="similarity">
    <text evidence="2">Belongs to the TRAFAC class translation factor GTPase superfamily. Classic translation factor GTPase family. IF-2 subfamily.</text>
</comment>
<evidence type="ECO:0000250" key="1"/>
<evidence type="ECO:0000255" key="2">
    <source>
        <dbReference type="HAMAP-Rule" id="MF_00100"/>
    </source>
</evidence>
<evidence type="ECO:0000256" key="3">
    <source>
        <dbReference type="SAM" id="MobiDB-lite"/>
    </source>
</evidence>
<keyword id="KW-0963">Cytoplasm</keyword>
<keyword id="KW-0342">GTP-binding</keyword>
<keyword id="KW-0396">Initiation factor</keyword>
<keyword id="KW-0547">Nucleotide-binding</keyword>
<keyword id="KW-0648">Protein biosynthesis</keyword>
<keyword id="KW-1185">Reference proteome</keyword>
<reference key="1">
    <citation type="submission" date="2006-03" db="EMBL/GenBank/DDBJ databases">
        <title>Complete sequence of Shewanella denitrificans OS217.</title>
        <authorList>
            <consortium name="US DOE Joint Genome Institute"/>
            <person name="Copeland A."/>
            <person name="Lucas S."/>
            <person name="Lapidus A."/>
            <person name="Barry K."/>
            <person name="Detter J.C."/>
            <person name="Glavina del Rio T."/>
            <person name="Hammon N."/>
            <person name="Israni S."/>
            <person name="Dalin E."/>
            <person name="Tice H."/>
            <person name="Pitluck S."/>
            <person name="Brettin T."/>
            <person name="Bruce D."/>
            <person name="Han C."/>
            <person name="Tapia R."/>
            <person name="Gilna P."/>
            <person name="Kiss H."/>
            <person name="Schmutz J."/>
            <person name="Larimer F."/>
            <person name="Land M."/>
            <person name="Hauser L."/>
            <person name="Kyrpides N."/>
            <person name="Lykidis A."/>
            <person name="Richardson P."/>
        </authorList>
    </citation>
    <scope>NUCLEOTIDE SEQUENCE [LARGE SCALE GENOMIC DNA]</scope>
    <source>
        <strain>OS217 / ATCC BAA-1090 / DSM 15013</strain>
    </source>
</reference>
<dbReference type="EMBL" id="CP000302">
    <property type="protein sequence ID" value="ABE54295.1"/>
    <property type="molecule type" value="Genomic_DNA"/>
</dbReference>
<dbReference type="RefSeq" id="WP_011495459.1">
    <property type="nucleotide sequence ID" value="NC_007954.1"/>
</dbReference>
<dbReference type="SMR" id="Q12QI1"/>
<dbReference type="STRING" id="318161.Sden_1007"/>
<dbReference type="KEGG" id="sdn:Sden_1007"/>
<dbReference type="eggNOG" id="COG0532">
    <property type="taxonomic scope" value="Bacteria"/>
</dbReference>
<dbReference type="HOGENOM" id="CLU_006301_6_3_6"/>
<dbReference type="OrthoDB" id="9811804at2"/>
<dbReference type="Proteomes" id="UP000001982">
    <property type="component" value="Chromosome"/>
</dbReference>
<dbReference type="GO" id="GO:0005829">
    <property type="term" value="C:cytosol"/>
    <property type="evidence" value="ECO:0007669"/>
    <property type="project" value="TreeGrafter"/>
</dbReference>
<dbReference type="GO" id="GO:0005525">
    <property type="term" value="F:GTP binding"/>
    <property type="evidence" value="ECO:0007669"/>
    <property type="project" value="UniProtKB-KW"/>
</dbReference>
<dbReference type="GO" id="GO:0003924">
    <property type="term" value="F:GTPase activity"/>
    <property type="evidence" value="ECO:0007669"/>
    <property type="project" value="UniProtKB-UniRule"/>
</dbReference>
<dbReference type="GO" id="GO:0097216">
    <property type="term" value="F:guanosine tetraphosphate binding"/>
    <property type="evidence" value="ECO:0007669"/>
    <property type="project" value="UniProtKB-ARBA"/>
</dbReference>
<dbReference type="GO" id="GO:0003743">
    <property type="term" value="F:translation initiation factor activity"/>
    <property type="evidence" value="ECO:0007669"/>
    <property type="project" value="UniProtKB-UniRule"/>
</dbReference>
<dbReference type="CDD" id="cd01887">
    <property type="entry name" value="IF2_eIF5B"/>
    <property type="match status" value="1"/>
</dbReference>
<dbReference type="CDD" id="cd03702">
    <property type="entry name" value="IF2_mtIF2_II"/>
    <property type="match status" value="1"/>
</dbReference>
<dbReference type="CDD" id="cd03692">
    <property type="entry name" value="mtIF2_IVc"/>
    <property type="match status" value="1"/>
</dbReference>
<dbReference type="FunFam" id="2.40.30.10:FF:000007">
    <property type="entry name" value="Translation initiation factor IF-2"/>
    <property type="match status" value="1"/>
</dbReference>
<dbReference type="FunFam" id="2.40.30.10:FF:000008">
    <property type="entry name" value="Translation initiation factor IF-2"/>
    <property type="match status" value="1"/>
</dbReference>
<dbReference type="FunFam" id="3.40.50.10050:FF:000001">
    <property type="entry name" value="Translation initiation factor IF-2"/>
    <property type="match status" value="1"/>
</dbReference>
<dbReference type="FunFam" id="3.40.50.300:FF:000019">
    <property type="entry name" value="Translation initiation factor IF-2"/>
    <property type="match status" value="1"/>
</dbReference>
<dbReference type="Gene3D" id="3.40.50.300">
    <property type="entry name" value="P-loop containing nucleotide triphosphate hydrolases"/>
    <property type="match status" value="1"/>
</dbReference>
<dbReference type="Gene3D" id="3.30.56.50">
    <property type="entry name" value="Putative DNA-binding domain, N-terminal subdomain of bacterial translation initiation factor IF2"/>
    <property type="match status" value="1"/>
</dbReference>
<dbReference type="Gene3D" id="2.40.30.10">
    <property type="entry name" value="Translation factors"/>
    <property type="match status" value="2"/>
</dbReference>
<dbReference type="Gene3D" id="3.40.50.10050">
    <property type="entry name" value="Translation initiation factor IF- 2, domain 3"/>
    <property type="match status" value="1"/>
</dbReference>
<dbReference type="HAMAP" id="MF_00100_B">
    <property type="entry name" value="IF_2_B"/>
    <property type="match status" value="1"/>
</dbReference>
<dbReference type="InterPro" id="IPR009061">
    <property type="entry name" value="DNA-bd_dom_put_sf"/>
</dbReference>
<dbReference type="InterPro" id="IPR053905">
    <property type="entry name" value="EF-G-like_DII"/>
</dbReference>
<dbReference type="InterPro" id="IPR004161">
    <property type="entry name" value="EFTu-like_2"/>
</dbReference>
<dbReference type="InterPro" id="IPR013575">
    <property type="entry name" value="IF2_assoc_dom_bac"/>
</dbReference>
<dbReference type="InterPro" id="IPR044145">
    <property type="entry name" value="IF2_II"/>
</dbReference>
<dbReference type="InterPro" id="IPR006847">
    <property type="entry name" value="IF2_N"/>
</dbReference>
<dbReference type="InterPro" id="IPR027417">
    <property type="entry name" value="P-loop_NTPase"/>
</dbReference>
<dbReference type="InterPro" id="IPR005225">
    <property type="entry name" value="Small_GTP-bd"/>
</dbReference>
<dbReference type="InterPro" id="IPR000795">
    <property type="entry name" value="T_Tr_GTP-bd_dom"/>
</dbReference>
<dbReference type="InterPro" id="IPR000178">
    <property type="entry name" value="TF_IF2_bacterial-like"/>
</dbReference>
<dbReference type="InterPro" id="IPR015760">
    <property type="entry name" value="TIF_IF2"/>
</dbReference>
<dbReference type="InterPro" id="IPR023115">
    <property type="entry name" value="TIF_IF2_dom3"/>
</dbReference>
<dbReference type="InterPro" id="IPR036925">
    <property type="entry name" value="TIF_IF2_dom3_sf"/>
</dbReference>
<dbReference type="InterPro" id="IPR009000">
    <property type="entry name" value="Transl_B-barrel_sf"/>
</dbReference>
<dbReference type="NCBIfam" id="TIGR00487">
    <property type="entry name" value="IF-2"/>
    <property type="match status" value="1"/>
</dbReference>
<dbReference type="NCBIfam" id="TIGR00231">
    <property type="entry name" value="small_GTP"/>
    <property type="match status" value="1"/>
</dbReference>
<dbReference type="PANTHER" id="PTHR43381:SF5">
    <property type="entry name" value="TR-TYPE G DOMAIN-CONTAINING PROTEIN"/>
    <property type="match status" value="1"/>
</dbReference>
<dbReference type="PANTHER" id="PTHR43381">
    <property type="entry name" value="TRANSLATION INITIATION FACTOR IF-2-RELATED"/>
    <property type="match status" value="1"/>
</dbReference>
<dbReference type="Pfam" id="PF22042">
    <property type="entry name" value="EF-G_D2"/>
    <property type="match status" value="1"/>
</dbReference>
<dbReference type="Pfam" id="PF00009">
    <property type="entry name" value="GTP_EFTU"/>
    <property type="match status" value="1"/>
</dbReference>
<dbReference type="Pfam" id="PF03144">
    <property type="entry name" value="GTP_EFTU_D2"/>
    <property type="match status" value="1"/>
</dbReference>
<dbReference type="Pfam" id="PF11987">
    <property type="entry name" value="IF-2"/>
    <property type="match status" value="1"/>
</dbReference>
<dbReference type="Pfam" id="PF08364">
    <property type="entry name" value="IF2_assoc"/>
    <property type="match status" value="1"/>
</dbReference>
<dbReference type="Pfam" id="PF04760">
    <property type="entry name" value="IF2_N"/>
    <property type="match status" value="2"/>
</dbReference>
<dbReference type="SUPFAM" id="SSF52156">
    <property type="entry name" value="Initiation factor IF2/eIF5b, domain 3"/>
    <property type="match status" value="1"/>
</dbReference>
<dbReference type="SUPFAM" id="SSF52540">
    <property type="entry name" value="P-loop containing nucleoside triphosphate hydrolases"/>
    <property type="match status" value="1"/>
</dbReference>
<dbReference type="SUPFAM" id="SSF46955">
    <property type="entry name" value="Putative DNA-binding domain"/>
    <property type="match status" value="1"/>
</dbReference>
<dbReference type="SUPFAM" id="SSF50447">
    <property type="entry name" value="Translation proteins"/>
    <property type="match status" value="2"/>
</dbReference>
<dbReference type="PROSITE" id="PS51722">
    <property type="entry name" value="G_TR_2"/>
    <property type="match status" value="1"/>
</dbReference>
<dbReference type="PROSITE" id="PS01176">
    <property type="entry name" value="IF2"/>
    <property type="match status" value="1"/>
</dbReference>
<name>IF2_SHEDO</name>
<protein>
    <recommendedName>
        <fullName evidence="2">Translation initiation factor IF-2</fullName>
    </recommendedName>
</protein>
<accession>Q12QI1</accession>